<reference key="1">
    <citation type="journal article" date="2007" name="Science">
        <title>Legumes symbioses: absence of nod genes in photosynthetic bradyrhizobia.</title>
        <authorList>
            <person name="Giraud E."/>
            <person name="Moulin L."/>
            <person name="Vallenet D."/>
            <person name="Barbe V."/>
            <person name="Cytryn E."/>
            <person name="Avarre J.-C."/>
            <person name="Jaubert M."/>
            <person name="Simon D."/>
            <person name="Cartieaux F."/>
            <person name="Prin Y."/>
            <person name="Bena G."/>
            <person name="Hannibal L."/>
            <person name="Fardoux J."/>
            <person name="Kojadinovic M."/>
            <person name="Vuillet L."/>
            <person name="Lajus A."/>
            <person name="Cruveiller S."/>
            <person name="Rouy Z."/>
            <person name="Mangenot S."/>
            <person name="Segurens B."/>
            <person name="Dossat C."/>
            <person name="Franck W.L."/>
            <person name="Chang W.-S."/>
            <person name="Saunders E."/>
            <person name="Bruce D."/>
            <person name="Richardson P."/>
            <person name="Normand P."/>
            <person name="Dreyfus B."/>
            <person name="Pignol D."/>
            <person name="Stacey G."/>
            <person name="Emerich D."/>
            <person name="Vermeglio A."/>
            <person name="Medigue C."/>
            <person name="Sadowsky M."/>
        </authorList>
    </citation>
    <scope>NUCLEOTIDE SEQUENCE [LARGE SCALE GENOMIC DNA]</scope>
    <source>
        <strain>ORS 278</strain>
    </source>
</reference>
<keyword id="KW-1185">Reference proteome</keyword>
<keyword id="KW-0687">Ribonucleoprotein</keyword>
<keyword id="KW-0689">Ribosomal protein</keyword>
<keyword id="KW-0694">RNA-binding</keyword>
<keyword id="KW-0699">rRNA-binding</keyword>
<name>RL2_BRASO</name>
<gene>
    <name evidence="1" type="primary">rplB</name>
    <name type="ordered locus">BRADO3069</name>
</gene>
<organism>
    <name type="scientific">Bradyrhizobium sp. (strain ORS 278)</name>
    <dbReference type="NCBI Taxonomy" id="114615"/>
    <lineage>
        <taxon>Bacteria</taxon>
        <taxon>Pseudomonadati</taxon>
        <taxon>Pseudomonadota</taxon>
        <taxon>Alphaproteobacteria</taxon>
        <taxon>Hyphomicrobiales</taxon>
        <taxon>Nitrobacteraceae</taxon>
        <taxon>Bradyrhizobium</taxon>
    </lineage>
</organism>
<feature type="chain" id="PRO_0000309877" description="Large ribosomal subunit protein uL2">
    <location>
        <begin position="1"/>
        <end position="277"/>
    </location>
</feature>
<feature type="region of interest" description="Disordered" evidence="2">
    <location>
        <begin position="222"/>
        <end position="277"/>
    </location>
</feature>
<accession>A4YSJ5</accession>
<sequence>MALKTFNPTTPGQRQLVMVDRSALYKGKPVKALTEGKQSSGGRNNTGRITVRFLGGGHKQSYRTVDFKRDKVDVPATVERLEYDPNRTAFIALVKYQDGELAYILAPQRLAVGDTIVAGNYVDVKPGNVMPLGNMPVGTIVHNIEVKIGKGGQLARSAGTYAQLVGRDHDYVIVRLNSGEQRLVHGRCRGTIGAVSNPDHMNTSIGKAGRKRWMGRRPHNRGVAMNPIDHPHGGGEGRTSGGRHPVTPWGKPTKGKKTRTNKSTDKFILLSRHKRKK</sequence>
<dbReference type="EMBL" id="CU234118">
    <property type="protein sequence ID" value="CAL76871.1"/>
    <property type="molecule type" value="Genomic_DNA"/>
</dbReference>
<dbReference type="RefSeq" id="WP_011926053.1">
    <property type="nucleotide sequence ID" value="NC_009445.1"/>
</dbReference>
<dbReference type="SMR" id="A4YSJ5"/>
<dbReference type="STRING" id="114615.BRADO3069"/>
<dbReference type="KEGG" id="bra:BRADO3069"/>
<dbReference type="eggNOG" id="COG0090">
    <property type="taxonomic scope" value="Bacteria"/>
</dbReference>
<dbReference type="HOGENOM" id="CLU_036235_2_1_5"/>
<dbReference type="OrthoDB" id="9778722at2"/>
<dbReference type="Proteomes" id="UP000001994">
    <property type="component" value="Chromosome"/>
</dbReference>
<dbReference type="GO" id="GO:0015934">
    <property type="term" value="C:large ribosomal subunit"/>
    <property type="evidence" value="ECO:0007669"/>
    <property type="project" value="InterPro"/>
</dbReference>
<dbReference type="GO" id="GO:0019843">
    <property type="term" value="F:rRNA binding"/>
    <property type="evidence" value="ECO:0007669"/>
    <property type="project" value="UniProtKB-UniRule"/>
</dbReference>
<dbReference type="GO" id="GO:0003735">
    <property type="term" value="F:structural constituent of ribosome"/>
    <property type="evidence" value="ECO:0007669"/>
    <property type="project" value="InterPro"/>
</dbReference>
<dbReference type="GO" id="GO:0016740">
    <property type="term" value="F:transferase activity"/>
    <property type="evidence" value="ECO:0007669"/>
    <property type="project" value="InterPro"/>
</dbReference>
<dbReference type="GO" id="GO:0002181">
    <property type="term" value="P:cytoplasmic translation"/>
    <property type="evidence" value="ECO:0007669"/>
    <property type="project" value="TreeGrafter"/>
</dbReference>
<dbReference type="FunFam" id="2.30.30.30:FF:000055">
    <property type="entry name" value="50S ribosomal protein L2"/>
    <property type="match status" value="1"/>
</dbReference>
<dbReference type="FunFam" id="2.40.50.140:FF:000003">
    <property type="entry name" value="50S ribosomal protein L2"/>
    <property type="match status" value="1"/>
</dbReference>
<dbReference type="FunFam" id="4.10.950.10:FF:000001">
    <property type="entry name" value="50S ribosomal protein L2"/>
    <property type="match status" value="1"/>
</dbReference>
<dbReference type="Gene3D" id="2.30.30.30">
    <property type="match status" value="1"/>
</dbReference>
<dbReference type="Gene3D" id="2.40.50.140">
    <property type="entry name" value="Nucleic acid-binding proteins"/>
    <property type="match status" value="1"/>
</dbReference>
<dbReference type="Gene3D" id="4.10.950.10">
    <property type="entry name" value="Ribosomal protein L2, domain 3"/>
    <property type="match status" value="1"/>
</dbReference>
<dbReference type="HAMAP" id="MF_01320_B">
    <property type="entry name" value="Ribosomal_uL2_B"/>
    <property type="match status" value="1"/>
</dbReference>
<dbReference type="InterPro" id="IPR012340">
    <property type="entry name" value="NA-bd_OB-fold"/>
</dbReference>
<dbReference type="InterPro" id="IPR014722">
    <property type="entry name" value="Rib_uL2_dom2"/>
</dbReference>
<dbReference type="InterPro" id="IPR002171">
    <property type="entry name" value="Ribosomal_uL2"/>
</dbReference>
<dbReference type="InterPro" id="IPR005880">
    <property type="entry name" value="Ribosomal_uL2_bac/org-type"/>
</dbReference>
<dbReference type="InterPro" id="IPR022669">
    <property type="entry name" value="Ribosomal_uL2_C"/>
</dbReference>
<dbReference type="InterPro" id="IPR022671">
    <property type="entry name" value="Ribosomal_uL2_CS"/>
</dbReference>
<dbReference type="InterPro" id="IPR014726">
    <property type="entry name" value="Ribosomal_uL2_dom3"/>
</dbReference>
<dbReference type="InterPro" id="IPR022666">
    <property type="entry name" value="Ribosomal_uL2_RNA-bd_dom"/>
</dbReference>
<dbReference type="InterPro" id="IPR008991">
    <property type="entry name" value="Translation_prot_SH3-like_sf"/>
</dbReference>
<dbReference type="NCBIfam" id="TIGR01171">
    <property type="entry name" value="rplB_bact"/>
    <property type="match status" value="1"/>
</dbReference>
<dbReference type="PANTHER" id="PTHR13691:SF5">
    <property type="entry name" value="LARGE RIBOSOMAL SUBUNIT PROTEIN UL2M"/>
    <property type="match status" value="1"/>
</dbReference>
<dbReference type="PANTHER" id="PTHR13691">
    <property type="entry name" value="RIBOSOMAL PROTEIN L2"/>
    <property type="match status" value="1"/>
</dbReference>
<dbReference type="Pfam" id="PF00181">
    <property type="entry name" value="Ribosomal_L2"/>
    <property type="match status" value="1"/>
</dbReference>
<dbReference type="Pfam" id="PF03947">
    <property type="entry name" value="Ribosomal_L2_C"/>
    <property type="match status" value="1"/>
</dbReference>
<dbReference type="PIRSF" id="PIRSF002158">
    <property type="entry name" value="Ribosomal_L2"/>
    <property type="match status" value="1"/>
</dbReference>
<dbReference type="SMART" id="SM01383">
    <property type="entry name" value="Ribosomal_L2"/>
    <property type="match status" value="1"/>
</dbReference>
<dbReference type="SMART" id="SM01382">
    <property type="entry name" value="Ribosomal_L2_C"/>
    <property type="match status" value="1"/>
</dbReference>
<dbReference type="SUPFAM" id="SSF50249">
    <property type="entry name" value="Nucleic acid-binding proteins"/>
    <property type="match status" value="1"/>
</dbReference>
<dbReference type="SUPFAM" id="SSF50104">
    <property type="entry name" value="Translation proteins SH3-like domain"/>
    <property type="match status" value="1"/>
</dbReference>
<dbReference type="PROSITE" id="PS00467">
    <property type="entry name" value="RIBOSOMAL_L2"/>
    <property type="match status" value="1"/>
</dbReference>
<evidence type="ECO:0000255" key="1">
    <source>
        <dbReference type="HAMAP-Rule" id="MF_01320"/>
    </source>
</evidence>
<evidence type="ECO:0000256" key="2">
    <source>
        <dbReference type="SAM" id="MobiDB-lite"/>
    </source>
</evidence>
<evidence type="ECO:0000305" key="3"/>
<proteinExistence type="inferred from homology"/>
<comment type="function">
    <text evidence="1">One of the primary rRNA binding proteins. Required for association of the 30S and 50S subunits to form the 70S ribosome, for tRNA binding and peptide bond formation. It has been suggested to have peptidyltransferase activity; this is somewhat controversial. Makes several contacts with the 16S rRNA in the 70S ribosome.</text>
</comment>
<comment type="subunit">
    <text evidence="1">Part of the 50S ribosomal subunit. Forms a bridge to the 30S subunit in the 70S ribosome.</text>
</comment>
<comment type="similarity">
    <text evidence="1">Belongs to the universal ribosomal protein uL2 family.</text>
</comment>
<protein>
    <recommendedName>
        <fullName evidence="1">Large ribosomal subunit protein uL2</fullName>
    </recommendedName>
    <alternativeName>
        <fullName evidence="3">50S ribosomal protein L2</fullName>
    </alternativeName>
</protein>